<feature type="chain" id="PRO_1000095182" description="Aspartyl/glutamyl-tRNA(Asn/Gln) amidotransferase subunit B">
    <location>
        <begin position="1"/>
        <end position="475"/>
    </location>
</feature>
<keyword id="KW-0067">ATP-binding</keyword>
<keyword id="KW-0436">Ligase</keyword>
<keyword id="KW-0547">Nucleotide-binding</keyword>
<keyword id="KW-0648">Protein biosynthesis</keyword>
<comment type="function">
    <text evidence="1">Allows the formation of correctly charged Asn-tRNA(Asn) or Gln-tRNA(Gln) through the transamidation of misacylated Asp-tRNA(Asn) or Glu-tRNA(Gln) in organisms which lack either or both of asparaginyl-tRNA or glutaminyl-tRNA synthetases. The reaction takes place in the presence of glutamine and ATP through an activated phospho-Asp-tRNA(Asn) or phospho-Glu-tRNA(Gln).</text>
</comment>
<comment type="catalytic activity">
    <reaction evidence="1">
        <text>L-glutamyl-tRNA(Gln) + L-glutamine + ATP + H2O = L-glutaminyl-tRNA(Gln) + L-glutamate + ADP + phosphate + H(+)</text>
        <dbReference type="Rhea" id="RHEA:17521"/>
        <dbReference type="Rhea" id="RHEA-COMP:9681"/>
        <dbReference type="Rhea" id="RHEA-COMP:9684"/>
        <dbReference type="ChEBI" id="CHEBI:15377"/>
        <dbReference type="ChEBI" id="CHEBI:15378"/>
        <dbReference type="ChEBI" id="CHEBI:29985"/>
        <dbReference type="ChEBI" id="CHEBI:30616"/>
        <dbReference type="ChEBI" id="CHEBI:43474"/>
        <dbReference type="ChEBI" id="CHEBI:58359"/>
        <dbReference type="ChEBI" id="CHEBI:78520"/>
        <dbReference type="ChEBI" id="CHEBI:78521"/>
        <dbReference type="ChEBI" id="CHEBI:456216"/>
    </reaction>
</comment>
<comment type="catalytic activity">
    <reaction evidence="1">
        <text>L-aspartyl-tRNA(Asn) + L-glutamine + ATP + H2O = L-asparaginyl-tRNA(Asn) + L-glutamate + ADP + phosphate + 2 H(+)</text>
        <dbReference type="Rhea" id="RHEA:14513"/>
        <dbReference type="Rhea" id="RHEA-COMP:9674"/>
        <dbReference type="Rhea" id="RHEA-COMP:9677"/>
        <dbReference type="ChEBI" id="CHEBI:15377"/>
        <dbReference type="ChEBI" id="CHEBI:15378"/>
        <dbReference type="ChEBI" id="CHEBI:29985"/>
        <dbReference type="ChEBI" id="CHEBI:30616"/>
        <dbReference type="ChEBI" id="CHEBI:43474"/>
        <dbReference type="ChEBI" id="CHEBI:58359"/>
        <dbReference type="ChEBI" id="CHEBI:78515"/>
        <dbReference type="ChEBI" id="CHEBI:78516"/>
        <dbReference type="ChEBI" id="CHEBI:456216"/>
    </reaction>
</comment>
<comment type="subunit">
    <text evidence="1">Heterotrimer of A, B and C subunits.</text>
</comment>
<comment type="similarity">
    <text evidence="1">Belongs to the GatB/GatE family. GatB subfamily.</text>
</comment>
<name>GATB_BACMK</name>
<organism>
    <name type="scientific">Bacillus mycoides (strain KBAB4)</name>
    <name type="common">Bacillus weihenstephanensis</name>
    <dbReference type="NCBI Taxonomy" id="315730"/>
    <lineage>
        <taxon>Bacteria</taxon>
        <taxon>Bacillati</taxon>
        <taxon>Bacillota</taxon>
        <taxon>Bacilli</taxon>
        <taxon>Bacillales</taxon>
        <taxon>Bacillaceae</taxon>
        <taxon>Bacillus</taxon>
        <taxon>Bacillus cereus group</taxon>
    </lineage>
</organism>
<protein>
    <recommendedName>
        <fullName evidence="1">Aspartyl/glutamyl-tRNA(Asn/Gln) amidotransferase subunit B</fullName>
        <shortName evidence="1">Asp/Glu-ADT subunit B</shortName>
        <ecNumber evidence="1">6.3.5.-</ecNumber>
    </recommendedName>
</protein>
<sequence length="475" mass="53322">MNLETIIGLEVHVELKTNSKIFSASPTEFGAEPNTQTSVIDLGYPGVLPTLNKEAVNFAMKAAMALNCEIATETKFDRKNYFYPDNPKAYQISQFDKPIGENGWIEIEVDGKKKRIGITRLHLEEDAGKSTHAADGSLVDYNRQGMPLIEIVSEPDMRTPEEAYAYLEKLKSIIQYTGVSDCKMEEGSLRCDANISLRPVGQEKFGTKAELKNLNSFTYVQKGLEHEQVRQEKELLSGGIIQQETRRYDEATKKTILMRIKEGSDDYRYFPEPDLVELYIDDEWKEEIRASIPELPDARKARYVEEVGLPAYDAHVLTLTKEMSDFFEATVADGADAKLTSNWLMGEVLAYLNKQQKELKDVALTPAGLAKMVQLIEKGTISSKIAKKVFNELIEKGGDPEEIVKAKGLVQISDEGTLRKVVTEILDNNEQSIEDFKNGKDRAIGFLVGQIMKATKGQANPPLVNKILLEEINKR</sequence>
<evidence type="ECO:0000255" key="1">
    <source>
        <dbReference type="HAMAP-Rule" id="MF_00121"/>
    </source>
</evidence>
<accession>A9VRH8</accession>
<gene>
    <name evidence="1" type="primary">gatB</name>
    <name type="ordered locus">BcerKBAB4_0302</name>
</gene>
<reference key="1">
    <citation type="journal article" date="2008" name="Chem. Biol. Interact.">
        <title>Extending the Bacillus cereus group genomics to putative food-borne pathogens of different toxicity.</title>
        <authorList>
            <person name="Lapidus A."/>
            <person name="Goltsman E."/>
            <person name="Auger S."/>
            <person name="Galleron N."/>
            <person name="Segurens B."/>
            <person name="Dossat C."/>
            <person name="Land M.L."/>
            <person name="Broussolle V."/>
            <person name="Brillard J."/>
            <person name="Guinebretiere M.-H."/>
            <person name="Sanchis V."/>
            <person name="Nguen-the C."/>
            <person name="Lereclus D."/>
            <person name="Richardson P."/>
            <person name="Wincker P."/>
            <person name="Weissenbach J."/>
            <person name="Ehrlich S.D."/>
            <person name="Sorokin A."/>
        </authorList>
    </citation>
    <scope>NUCLEOTIDE SEQUENCE [LARGE SCALE GENOMIC DNA]</scope>
    <source>
        <strain>KBAB4</strain>
    </source>
</reference>
<proteinExistence type="inferred from homology"/>
<dbReference type="EC" id="6.3.5.-" evidence="1"/>
<dbReference type="EMBL" id="CP000903">
    <property type="protein sequence ID" value="ABY41568.1"/>
    <property type="molecule type" value="Genomic_DNA"/>
</dbReference>
<dbReference type="RefSeq" id="WP_002010050.1">
    <property type="nucleotide sequence ID" value="NC_010184.1"/>
</dbReference>
<dbReference type="SMR" id="A9VRH8"/>
<dbReference type="GeneID" id="66264585"/>
<dbReference type="KEGG" id="bwe:BcerKBAB4_0302"/>
<dbReference type="eggNOG" id="COG0064">
    <property type="taxonomic scope" value="Bacteria"/>
</dbReference>
<dbReference type="HOGENOM" id="CLU_019240_0_0_9"/>
<dbReference type="Proteomes" id="UP000002154">
    <property type="component" value="Chromosome"/>
</dbReference>
<dbReference type="GO" id="GO:0050566">
    <property type="term" value="F:asparaginyl-tRNA synthase (glutamine-hydrolyzing) activity"/>
    <property type="evidence" value="ECO:0007669"/>
    <property type="project" value="RHEA"/>
</dbReference>
<dbReference type="GO" id="GO:0005524">
    <property type="term" value="F:ATP binding"/>
    <property type="evidence" value="ECO:0007669"/>
    <property type="project" value="UniProtKB-KW"/>
</dbReference>
<dbReference type="GO" id="GO:0050567">
    <property type="term" value="F:glutaminyl-tRNA synthase (glutamine-hydrolyzing) activity"/>
    <property type="evidence" value="ECO:0007669"/>
    <property type="project" value="UniProtKB-UniRule"/>
</dbReference>
<dbReference type="GO" id="GO:0070681">
    <property type="term" value="P:glutaminyl-tRNAGln biosynthesis via transamidation"/>
    <property type="evidence" value="ECO:0007669"/>
    <property type="project" value="TreeGrafter"/>
</dbReference>
<dbReference type="GO" id="GO:0006412">
    <property type="term" value="P:translation"/>
    <property type="evidence" value="ECO:0007669"/>
    <property type="project" value="UniProtKB-UniRule"/>
</dbReference>
<dbReference type="FunFam" id="1.10.10.410:FF:000001">
    <property type="entry name" value="Aspartyl/glutamyl-tRNA(Asn/Gln) amidotransferase subunit B"/>
    <property type="match status" value="1"/>
</dbReference>
<dbReference type="FunFam" id="1.10.150.380:FF:000001">
    <property type="entry name" value="Aspartyl/glutamyl-tRNA(Asn/Gln) amidotransferase subunit B"/>
    <property type="match status" value="1"/>
</dbReference>
<dbReference type="Gene3D" id="1.10.10.410">
    <property type="match status" value="1"/>
</dbReference>
<dbReference type="Gene3D" id="1.10.150.380">
    <property type="entry name" value="GatB domain, N-terminal subdomain"/>
    <property type="match status" value="1"/>
</dbReference>
<dbReference type="HAMAP" id="MF_00121">
    <property type="entry name" value="GatB"/>
    <property type="match status" value="1"/>
</dbReference>
<dbReference type="InterPro" id="IPR017959">
    <property type="entry name" value="Asn/Gln-tRNA_amidoTrfase_suB/E"/>
</dbReference>
<dbReference type="InterPro" id="IPR006075">
    <property type="entry name" value="Asn/Gln-tRNA_Trfase_suB/E_cat"/>
</dbReference>
<dbReference type="InterPro" id="IPR018027">
    <property type="entry name" value="Asn/Gln_amidotransferase"/>
</dbReference>
<dbReference type="InterPro" id="IPR003789">
    <property type="entry name" value="Asn/Gln_tRNA_amidoTrase-B-like"/>
</dbReference>
<dbReference type="InterPro" id="IPR004413">
    <property type="entry name" value="GatB"/>
</dbReference>
<dbReference type="InterPro" id="IPR042114">
    <property type="entry name" value="GatB_C_1"/>
</dbReference>
<dbReference type="InterPro" id="IPR023168">
    <property type="entry name" value="GatB_Yqey_C_2"/>
</dbReference>
<dbReference type="InterPro" id="IPR017958">
    <property type="entry name" value="Gln-tRNA_amidoTrfase_suB_CS"/>
</dbReference>
<dbReference type="InterPro" id="IPR014746">
    <property type="entry name" value="Gln_synth/guanido_kin_cat_dom"/>
</dbReference>
<dbReference type="NCBIfam" id="TIGR00133">
    <property type="entry name" value="gatB"/>
    <property type="match status" value="1"/>
</dbReference>
<dbReference type="NCBIfam" id="NF004011">
    <property type="entry name" value="PRK05477.1-1"/>
    <property type="match status" value="1"/>
</dbReference>
<dbReference type="NCBIfam" id="NF004012">
    <property type="entry name" value="PRK05477.1-2"/>
    <property type="match status" value="1"/>
</dbReference>
<dbReference type="NCBIfam" id="NF004014">
    <property type="entry name" value="PRK05477.1-4"/>
    <property type="match status" value="1"/>
</dbReference>
<dbReference type="PANTHER" id="PTHR11659">
    <property type="entry name" value="GLUTAMYL-TRNA GLN AMIDOTRANSFERASE SUBUNIT B MITOCHONDRIAL AND PROKARYOTIC PET112-RELATED"/>
    <property type="match status" value="1"/>
</dbReference>
<dbReference type="PANTHER" id="PTHR11659:SF0">
    <property type="entry name" value="GLUTAMYL-TRNA(GLN) AMIDOTRANSFERASE SUBUNIT B, MITOCHONDRIAL"/>
    <property type="match status" value="1"/>
</dbReference>
<dbReference type="Pfam" id="PF02934">
    <property type="entry name" value="GatB_N"/>
    <property type="match status" value="1"/>
</dbReference>
<dbReference type="Pfam" id="PF02637">
    <property type="entry name" value="GatB_Yqey"/>
    <property type="match status" value="1"/>
</dbReference>
<dbReference type="SMART" id="SM00845">
    <property type="entry name" value="GatB_Yqey"/>
    <property type="match status" value="1"/>
</dbReference>
<dbReference type="SUPFAM" id="SSF89095">
    <property type="entry name" value="GatB/YqeY motif"/>
    <property type="match status" value="1"/>
</dbReference>
<dbReference type="SUPFAM" id="SSF55931">
    <property type="entry name" value="Glutamine synthetase/guanido kinase"/>
    <property type="match status" value="1"/>
</dbReference>
<dbReference type="PROSITE" id="PS01234">
    <property type="entry name" value="GATB"/>
    <property type="match status" value="1"/>
</dbReference>